<evidence type="ECO:0000255" key="1">
    <source>
        <dbReference type="HAMAP-Rule" id="MF_00279"/>
    </source>
</evidence>
<gene>
    <name evidence="1" type="primary">pdxJ</name>
    <name type="ordered locus">SBO_2592</name>
</gene>
<dbReference type="EC" id="2.6.99.2" evidence="1"/>
<dbReference type="EMBL" id="CP000036">
    <property type="protein sequence ID" value="ABB67135.1"/>
    <property type="molecule type" value="Genomic_DNA"/>
</dbReference>
<dbReference type="RefSeq" id="WP_001364795.1">
    <property type="nucleotide sequence ID" value="NC_007613.1"/>
</dbReference>
<dbReference type="SMR" id="Q31XS3"/>
<dbReference type="KEGG" id="sbo:SBO_2592"/>
<dbReference type="HOGENOM" id="CLU_074563_0_0_6"/>
<dbReference type="UniPathway" id="UPA00244">
    <property type="reaction ID" value="UER00313"/>
</dbReference>
<dbReference type="Proteomes" id="UP000007067">
    <property type="component" value="Chromosome"/>
</dbReference>
<dbReference type="GO" id="GO:0005829">
    <property type="term" value="C:cytosol"/>
    <property type="evidence" value="ECO:0007669"/>
    <property type="project" value="TreeGrafter"/>
</dbReference>
<dbReference type="GO" id="GO:0033856">
    <property type="term" value="F:pyridoxine 5'-phosphate synthase activity"/>
    <property type="evidence" value="ECO:0007669"/>
    <property type="project" value="UniProtKB-EC"/>
</dbReference>
<dbReference type="GO" id="GO:0008615">
    <property type="term" value="P:pyridoxine biosynthetic process"/>
    <property type="evidence" value="ECO:0007669"/>
    <property type="project" value="UniProtKB-UniRule"/>
</dbReference>
<dbReference type="CDD" id="cd00003">
    <property type="entry name" value="PNPsynthase"/>
    <property type="match status" value="1"/>
</dbReference>
<dbReference type="FunFam" id="3.20.20.70:FF:000042">
    <property type="entry name" value="Pyridoxine 5'-phosphate synthase"/>
    <property type="match status" value="1"/>
</dbReference>
<dbReference type="Gene3D" id="3.20.20.70">
    <property type="entry name" value="Aldolase class I"/>
    <property type="match status" value="1"/>
</dbReference>
<dbReference type="HAMAP" id="MF_00279">
    <property type="entry name" value="PdxJ"/>
    <property type="match status" value="1"/>
</dbReference>
<dbReference type="InterPro" id="IPR013785">
    <property type="entry name" value="Aldolase_TIM"/>
</dbReference>
<dbReference type="InterPro" id="IPR004569">
    <property type="entry name" value="PyrdxlP_synth_PdxJ"/>
</dbReference>
<dbReference type="InterPro" id="IPR036130">
    <property type="entry name" value="Pyridoxine-5'_phos_synth"/>
</dbReference>
<dbReference type="NCBIfam" id="TIGR00559">
    <property type="entry name" value="pdxJ"/>
    <property type="match status" value="1"/>
</dbReference>
<dbReference type="NCBIfam" id="NF003623">
    <property type="entry name" value="PRK05265.1-1"/>
    <property type="match status" value="1"/>
</dbReference>
<dbReference type="NCBIfam" id="NF003624">
    <property type="entry name" value="PRK05265.1-2"/>
    <property type="match status" value="1"/>
</dbReference>
<dbReference type="NCBIfam" id="NF003625">
    <property type="entry name" value="PRK05265.1-3"/>
    <property type="match status" value="1"/>
</dbReference>
<dbReference type="NCBIfam" id="NF003626">
    <property type="entry name" value="PRK05265.1-4"/>
    <property type="match status" value="1"/>
</dbReference>
<dbReference type="NCBIfam" id="NF003627">
    <property type="entry name" value="PRK05265.1-5"/>
    <property type="match status" value="1"/>
</dbReference>
<dbReference type="PANTHER" id="PTHR30456">
    <property type="entry name" value="PYRIDOXINE 5'-PHOSPHATE SYNTHASE"/>
    <property type="match status" value="1"/>
</dbReference>
<dbReference type="PANTHER" id="PTHR30456:SF0">
    <property type="entry name" value="PYRIDOXINE 5'-PHOSPHATE SYNTHASE"/>
    <property type="match status" value="1"/>
</dbReference>
<dbReference type="Pfam" id="PF03740">
    <property type="entry name" value="PdxJ"/>
    <property type="match status" value="1"/>
</dbReference>
<dbReference type="SUPFAM" id="SSF63892">
    <property type="entry name" value="Pyridoxine 5'-phosphate synthase"/>
    <property type="match status" value="1"/>
</dbReference>
<comment type="function">
    <text evidence="1">Catalyzes the complicated ring closure reaction between the two acyclic compounds 1-deoxy-D-xylulose-5-phosphate (DXP) and 3-amino-2-oxopropyl phosphate (1-amino-acetone-3-phosphate or AAP) to form pyridoxine 5'-phosphate (PNP) and inorganic phosphate.</text>
</comment>
<comment type="catalytic activity">
    <reaction evidence="1">
        <text>3-amino-2-oxopropyl phosphate + 1-deoxy-D-xylulose 5-phosphate = pyridoxine 5'-phosphate + phosphate + 2 H2O + H(+)</text>
        <dbReference type="Rhea" id="RHEA:15265"/>
        <dbReference type="ChEBI" id="CHEBI:15377"/>
        <dbReference type="ChEBI" id="CHEBI:15378"/>
        <dbReference type="ChEBI" id="CHEBI:43474"/>
        <dbReference type="ChEBI" id="CHEBI:57279"/>
        <dbReference type="ChEBI" id="CHEBI:57792"/>
        <dbReference type="ChEBI" id="CHEBI:58589"/>
        <dbReference type="EC" id="2.6.99.2"/>
    </reaction>
</comment>
<comment type="pathway">
    <text evidence="1">Cofactor biosynthesis; pyridoxine 5'-phosphate biosynthesis; pyridoxine 5'-phosphate from D-erythrose 4-phosphate: step 5/5.</text>
</comment>
<comment type="subunit">
    <text evidence="1">Homooctamer; tetramer of dimers.</text>
</comment>
<comment type="subcellular location">
    <subcellularLocation>
        <location evidence="1">Cytoplasm</location>
    </subcellularLocation>
</comment>
<comment type="similarity">
    <text evidence="1">Belongs to the PNP synthase family.</text>
</comment>
<feature type="chain" id="PRO_0000231845" description="Pyridoxine 5'-phosphate synthase">
    <location>
        <begin position="1"/>
        <end position="243"/>
    </location>
</feature>
<feature type="active site" description="Proton acceptor" evidence="1">
    <location>
        <position position="45"/>
    </location>
</feature>
<feature type="active site" description="Proton acceptor" evidence="1">
    <location>
        <position position="72"/>
    </location>
</feature>
<feature type="active site" description="Proton donor" evidence="1">
    <location>
        <position position="193"/>
    </location>
</feature>
<feature type="binding site" evidence="1">
    <location>
        <position position="9"/>
    </location>
    <ligand>
        <name>3-amino-2-oxopropyl phosphate</name>
        <dbReference type="ChEBI" id="CHEBI:57279"/>
    </ligand>
</feature>
<feature type="binding site" evidence="1">
    <location>
        <begin position="11"/>
        <end position="12"/>
    </location>
    <ligand>
        <name>1-deoxy-D-xylulose 5-phosphate</name>
        <dbReference type="ChEBI" id="CHEBI:57792"/>
    </ligand>
</feature>
<feature type="binding site" evidence="1">
    <location>
        <position position="20"/>
    </location>
    <ligand>
        <name>3-amino-2-oxopropyl phosphate</name>
        <dbReference type="ChEBI" id="CHEBI:57279"/>
    </ligand>
</feature>
<feature type="binding site" evidence="1">
    <location>
        <position position="47"/>
    </location>
    <ligand>
        <name>1-deoxy-D-xylulose 5-phosphate</name>
        <dbReference type="ChEBI" id="CHEBI:57792"/>
    </ligand>
</feature>
<feature type="binding site" evidence="1">
    <location>
        <position position="52"/>
    </location>
    <ligand>
        <name>1-deoxy-D-xylulose 5-phosphate</name>
        <dbReference type="ChEBI" id="CHEBI:57792"/>
    </ligand>
</feature>
<feature type="binding site" evidence="1">
    <location>
        <position position="102"/>
    </location>
    <ligand>
        <name>1-deoxy-D-xylulose 5-phosphate</name>
        <dbReference type="ChEBI" id="CHEBI:57792"/>
    </ligand>
</feature>
<feature type="binding site" evidence="1">
    <location>
        <position position="194"/>
    </location>
    <ligand>
        <name>3-amino-2-oxopropyl phosphate</name>
        <dbReference type="ChEBI" id="CHEBI:57279"/>
    </ligand>
</feature>
<feature type="binding site" evidence="1">
    <location>
        <begin position="215"/>
        <end position="216"/>
    </location>
    <ligand>
        <name>3-amino-2-oxopropyl phosphate</name>
        <dbReference type="ChEBI" id="CHEBI:57279"/>
    </ligand>
</feature>
<feature type="site" description="Transition state stabilizer" evidence="1">
    <location>
        <position position="153"/>
    </location>
</feature>
<organism>
    <name type="scientific">Shigella boydii serotype 4 (strain Sb227)</name>
    <dbReference type="NCBI Taxonomy" id="300268"/>
    <lineage>
        <taxon>Bacteria</taxon>
        <taxon>Pseudomonadati</taxon>
        <taxon>Pseudomonadota</taxon>
        <taxon>Gammaproteobacteria</taxon>
        <taxon>Enterobacterales</taxon>
        <taxon>Enterobacteriaceae</taxon>
        <taxon>Shigella</taxon>
    </lineage>
</organism>
<accession>Q31XS3</accession>
<reference key="1">
    <citation type="journal article" date="2005" name="Nucleic Acids Res.">
        <title>Genome dynamics and diversity of Shigella species, the etiologic agents of bacillary dysentery.</title>
        <authorList>
            <person name="Yang F."/>
            <person name="Yang J."/>
            <person name="Zhang X."/>
            <person name="Chen L."/>
            <person name="Jiang Y."/>
            <person name="Yan Y."/>
            <person name="Tang X."/>
            <person name="Wang J."/>
            <person name="Xiong Z."/>
            <person name="Dong J."/>
            <person name="Xue Y."/>
            <person name="Zhu Y."/>
            <person name="Xu X."/>
            <person name="Sun L."/>
            <person name="Chen S."/>
            <person name="Nie H."/>
            <person name="Peng J."/>
            <person name="Xu J."/>
            <person name="Wang Y."/>
            <person name="Yuan Z."/>
            <person name="Wen Y."/>
            <person name="Yao Z."/>
            <person name="Shen Y."/>
            <person name="Qiang B."/>
            <person name="Hou Y."/>
            <person name="Yu J."/>
            <person name="Jin Q."/>
        </authorList>
    </citation>
    <scope>NUCLEOTIDE SEQUENCE [LARGE SCALE GENOMIC DNA]</scope>
    <source>
        <strain>Sb227</strain>
    </source>
</reference>
<sequence>MAELLLGVNIDHIATLRNARGTAYPDPVQAAFIAEQAGADGITVHLREDRRHITDRDVRILRQTLDTRMNLEMAVTEEMLAIAVETKPHFCCLVPEKRQEVTTEGGLDVAGQREKMRDACKRLTDAGIQVSLFIDADEEQIKAAAEVGAPFIEIHTGCYADAKTDAEQAQELVRIAKAATFAASLGLKVNAGHGLTYHNVKAIAAIPEMHELNIGHAIIGRAVMTGLKDAVAEMKRLMLEARG</sequence>
<keyword id="KW-0963">Cytoplasm</keyword>
<keyword id="KW-0664">Pyridoxine biosynthesis</keyword>
<keyword id="KW-0808">Transferase</keyword>
<protein>
    <recommendedName>
        <fullName evidence="1">Pyridoxine 5'-phosphate synthase</fullName>
        <shortName evidence="1">PNP synthase</shortName>
        <ecNumber evidence="1">2.6.99.2</ecNumber>
    </recommendedName>
</protein>
<name>PDXJ_SHIBS</name>
<proteinExistence type="inferred from homology"/>